<comment type="function">
    <text evidence="5 6 7">Envelop protein that mediates acid-dependent endocytosis into host cells (PubMed:20538855). Plays an important role in endocytic entry of the virus by acting as an acid-sensitive membrane fusion suppressor (PubMed:22278246, PubMed:31220181). Low pH in host endosomes triggers conformational changes to allow de-repression of viral fusion complex activity and membrane fusion within vesicles (PubMed:31220181). Also plays a role in bridging the mature virion with structural protein OPG152.</text>
</comment>
<comment type="subunit">
    <text evidence="1 2 3 4 6">Interacts with proteins OPG094 and OPG143 (PubMed:22278246). Interacts with OPG154 (PubMed:18842719, PubMed:19369327). Interacts with OPG152 (PubMed:20484506). Interacts with host laminin (PubMed:17166913).</text>
</comment>
<comment type="subcellular location">
    <subcellularLocation>
        <location evidence="3">Virion membrane</location>
    </subcellularLocation>
    <text>OPG153 is anchored to the mature virion (MV) membrane through disulfide bonding with protein OPG154.</text>
</comment>
<comment type="similarity">
    <text evidence="8">Belongs to the orthopoxvirus OPG153 protein family.</text>
</comment>
<comment type="sequence caution" evidence="8">
    <conflict type="erroneous gene model prediction">
        <sequence resource="EMBL-CDS" id="AAA48323"/>
    </conflict>
</comment>
<comment type="sequence caution" evidence="8">
    <conflict type="erroneous gene model prediction">
        <sequence resource="EMBL-CDS" id="CAA40576"/>
    </conflict>
</comment>
<proteinExistence type="evidence at protein level"/>
<evidence type="ECO:0000269" key="1">
    <source>
    </source>
</evidence>
<evidence type="ECO:0000269" key="2">
    <source>
    </source>
</evidence>
<evidence type="ECO:0000269" key="3">
    <source>
    </source>
</evidence>
<evidence type="ECO:0000269" key="4">
    <source>
    </source>
</evidence>
<evidence type="ECO:0000269" key="5">
    <source>
    </source>
</evidence>
<evidence type="ECO:0000269" key="6">
    <source>
    </source>
</evidence>
<evidence type="ECO:0000269" key="7">
    <source>
    </source>
</evidence>
<evidence type="ECO:0000305" key="8"/>
<evidence type="ECO:0007829" key="9">
    <source>
        <dbReference type="PDB" id="6A9S"/>
    </source>
</evidence>
<sequence>MANIINLWNGIVPTVQDVNVASITAFKSMIDETWDKKIEANTCISRKHRNIIHEVIRDFMKAYPKMDENKKSPLGAPMQWLTQYYILKNEYHKTMLAYDNGSLNTKFKTLNIYMITNVGQYILYIVFCIISGKNHDGTPYIYDSEITSNDKNFINERIKYACKQILHGQLTIALRIRNKFMFIGSPMYLWFNVNGSQVYHDIYDRNAGFHNKEIGRLLYAFMYYLSISGRFLNDFALLKFTYLGESWTFSLSVPEYILYGLGYSVFDTIEKFSNDAILVYIRTNNRNGYDYVEFNKKGIAKVTEDKPDNDKRIHAIRLINDSTDVQHIHFGFRNMVIIDNECANIQSSAENATDTGHHQDSKINIEVEDDVIDDDDYNPKPTPIPEPHPRPPFPRHEYHKRPKLLPVEEPDPVKKDADRIRLDNHILNTLDHNLNFIGHYCCDTAAVDRLEHHIETLGQYAVILARKINMQTLLFPWPLPTVHPHAIDGSIPPHGRSTIL</sequence>
<accession>P24758</accession>
<accession>Q80HU7</accession>
<dbReference type="EMBL" id="M61187">
    <property type="protein sequence ID" value="AAA48323.1"/>
    <property type="status" value="ALT_SEQ"/>
    <property type="molecule type" value="Genomic_DNA"/>
</dbReference>
<dbReference type="EMBL" id="X57318">
    <property type="protein sequence ID" value="CAA40576.1"/>
    <property type="status" value="ALT_SEQ"/>
    <property type="molecule type" value="Genomic_DNA"/>
</dbReference>
<dbReference type="EMBL" id="AY243312">
    <property type="protein sequence ID" value="AAO89428.1"/>
    <property type="molecule type" value="Genomic_DNA"/>
</dbReference>
<dbReference type="PIR" id="S29910">
    <property type="entry name" value="S29910"/>
</dbReference>
<dbReference type="RefSeq" id="YP_233031.1">
    <property type="nucleotide sequence ID" value="NC_006998.1"/>
</dbReference>
<dbReference type="PDB" id="6A9S">
    <property type="method" value="X-ray"/>
    <property type="resolution" value="1.18 A"/>
    <property type="chains" value="A=1-397"/>
</dbReference>
<dbReference type="PDBsum" id="6A9S"/>
<dbReference type="SMR" id="P24758"/>
<dbReference type="DNASU" id="3707679"/>
<dbReference type="GeneID" id="3707679"/>
<dbReference type="KEGG" id="vg:3707679"/>
<dbReference type="Proteomes" id="UP000000344">
    <property type="component" value="Genome"/>
</dbReference>
<dbReference type="GO" id="GO:0016020">
    <property type="term" value="C:membrane"/>
    <property type="evidence" value="ECO:0007669"/>
    <property type="project" value="UniProtKB-KW"/>
</dbReference>
<dbReference type="GO" id="GO:0019031">
    <property type="term" value="C:viral envelope"/>
    <property type="evidence" value="ECO:0007669"/>
    <property type="project" value="InterPro"/>
</dbReference>
<dbReference type="GO" id="GO:0055036">
    <property type="term" value="C:virion membrane"/>
    <property type="evidence" value="ECO:0007669"/>
    <property type="project" value="UniProtKB-SubCell"/>
</dbReference>
<dbReference type="GO" id="GO:0141018">
    <property type="term" value="P:adhesion of symbiont to host via host extracellular matrix"/>
    <property type="evidence" value="ECO:0000269"/>
    <property type="project" value="SigSci"/>
</dbReference>
<dbReference type="GO" id="GO:0019064">
    <property type="term" value="P:fusion of virus membrane with host plasma membrane"/>
    <property type="evidence" value="ECO:0007669"/>
    <property type="project" value="InterPro"/>
</dbReference>
<dbReference type="InterPro" id="IPR003436">
    <property type="entry name" value="Chordopox_Fusion/A27"/>
</dbReference>
<dbReference type="InterPro" id="IPR009285">
    <property type="entry name" value="Poxvirus_A26L"/>
</dbReference>
<dbReference type="Pfam" id="PF06086">
    <property type="entry name" value="Pox_A30L_A26L"/>
    <property type="match status" value="1"/>
</dbReference>
<dbReference type="Pfam" id="PF02346">
    <property type="entry name" value="Vac_Fusion"/>
    <property type="match status" value="1"/>
</dbReference>
<gene>
    <name type="primary">OPG153</name>
    <name type="ordered locus">VACWR149</name>
    <name type="ORF">A26L</name>
</gene>
<feature type="chain" id="PRO_0000099278" description="Envelop protein OPG153">
    <location>
        <begin position="1"/>
        <end position="500"/>
    </location>
</feature>
<feature type="disulfide bond" evidence="7">
    <location>
        <begin position="43"/>
        <end position="342"/>
    </location>
</feature>
<feature type="disulfide bond" description="Interchain (with C-71 in A27)">
    <location>
        <position position="441"/>
    </location>
</feature>
<feature type="disulfide bond" description="Interchain (with C-72 in A27)">
    <location>
        <position position="442"/>
    </location>
</feature>
<feature type="mutagenesis site" description="Loss of pH sensitivity in the fusion process; when associated with R-53." evidence="7">
    <original>H</original>
    <variation>R</variation>
    <location>
        <position position="48"/>
    </location>
</feature>
<feature type="mutagenesis site" description="Loss of pH sensitivity in the fusion process; when associated with R-48." evidence="7">
    <original>H</original>
    <variation>R</variation>
    <location>
        <position position="53"/>
    </location>
</feature>
<feature type="mutagenesis site" description="About 50% loss of interaction with OPG154. Complete loss of interaction with A2; when associated with A-442." evidence="3">
    <original>C</original>
    <variation>A</variation>
    <location>
        <position position="441"/>
    </location>
</feature>
<feature type="mutagenesis site" description="About 60% loss of interaction with OPG154. Complete loss of interaction with A2; when associated with A-441." evidence="3">
    <original>C</original>
    <variation>A</variation>
    <location>
        <position position="442"/>
    </location>
</feature>
<feature type="helix" evidence="9">
    <location>
        <begin position="20"/>
        <end position="33"/>
    </location>
</feature>
<feature type="helix" evidence="9">
    <location>
        <begin position="46"/>
        <end position="62"/>
    </location>
</feature>
<feature type="helix" evidence="9">
    <location>
        <begin position="78"/>
        <end position="80"/>
    </location>
</feature>
<feature type="helix" evidence="9">
    <location>
        <begin position="83"/>
        <end position="86"/>
    </location>
</feature>
<feature type="helix" evidence="9">
    <location>
        <begin position="90"/>
        <end position="107"/>
    </location>
</feature>
<feature type="turn" evidence="9">
    <location>
        <begin position="112"/>
        <end position="114"/>
    </location>
</feature>
<feature type="helix" evidence="9">
    <location>
        <begin position="118"/>
        <end position="130"/>
    </location>
</feature>
<feature type="strand" evidence="9">
    <location>
        <begin position="139"/>
        <end position="141"/>
    </location>
</feature>
<feature type="helix" evidence="9">
    <location>
        <begin position="143"/>
        <end position="145"/>
    </location>
</feature>
<feature type="helix" evidence="9">
    <location>
        <begin position="151"/>
        <end position="176"/>
    </location>
</feature>
<feature type="helix" evidence="9">
    <location>
        <begin position="187"/>
        <end position="190"/>
    </location>
</feature>
<feature type="helix" evidence="9">
    <location>
        <begin position="195"/>
        <end position="203"/>
    </location>
</feature>
<feature type="helix" evidence="9">
    <location>
        <begin position="207"/>
        <end position="210"/>
    </location>
</feature>
<feature type="helix" evidence="9">
    <location>
        <begin position="216"/>
        <end position="227"/>
    </location>
</feature>
<feature type="helix" evidence="9">
    <location>
        <begin position="233"/>
        <end position="235"/>
    </location>
</feature>
<feature type="strand" evidence="9">
    <location>
        <begin position="238"/>
        <end position="242"/>
    </location>
</feature>
<feature type="strand" evidence="9">
    <location>
        <begin position="245"/>
        <end position="251"/>
    </location>
</feature>
<feature type="helix" evidence="9">
    <location>
        <begin position="255"/>
        <end position="261"/>
    </location>
</feature>
<feature type="strand" evidence="9">
    <location>
        <begin position="267"/>
        <end position="273"/>
    </location>
</feature>
<feature type="strand" evidence="9">
    <location>
        <begin position="276"/>
        <end position="283"/>
    </location>
</feature>
<feature type="strand" evidence="9">
    <location>
        <begin position="285"/>
        <end position="294"/>
    </location>
</feature>
<feature type="strand" evidence="9">
    <location>
        <begin position="296"/>
        <end position="299"/>
    </location>
</feature>
<feature type="turn" evidence="9">
    <location>
        <begin position="309"/>
        <end position="311"/>
    </location>
</feature>
<feature type="strand" evidence="9">
    <location>
        <begin position="312"/>
        <end position="319"/>
    </location>
</feature>
<feature type="helix" evidence="9">
    <location>
        <begin position="325"/>
        <end position="331"/>
    </location>
</feature>
<feature type="helix" evidence="9">
    <location>
        <begin position="333"/>
        <end position="336"/>
    </location>
</feature>
<feature type="helix" evidence="9">
    <location>
        <begin position="342"/>
        <end position="344"/>
    </location>
</feature>
<feature type="turn" evidence="9">
    <location>
        <begin position="349"/>
        <end position="351"/>
    </location>
</feature>
<feature type="helix" evidence="9">
    <location>
        <begin position="357"/>
        <end position="359"/>
    </location>
</feature>
<organism>
    <name type="scientific">Vaccinia virus (strain Western Reserve)</name>
    <name type="common">VACV</name>
    <name type="synonym">Vaccinia virus (strain WR)</name>
    <dbReference type="NCBI Taxonomy" id="10254"/>
    <lineage>
        <taxon>Viruses</taxon>
        <taxon>Varidnaviria</taxon>
        <taxon>Bamfordvirae</taxon>
        <taxon>Nucleocytoviricota</taxon>
        <taxon>Pokkesviricetes</taxon>
        <taxon>Chitovirales</taxon>
        <taxon>Poxviridae</taxon>
        <taxon>Chordopoxvirinae</taxon>
        <taxon>Orthopoxvirus</taxon>
        <taxon>Vaccinia virus</taxon>
    </lineage>
</organism>
<organismHost>
    <name type="scientific">Bos taurus</name>
    <name type="common">Bovine</name>
    <dbReference type="NCBI Taxonomy" id="9913"/>
</organismHost>
<keyword id="KW-0002">3D-structure</keyword>
<keyword id="KW-1015">Disulfide bond</keyword>
<keyword id="KW-0472">Membrane</keyword>
<keyword id="KW-0597">Phosphoprotein</keyword>
<keyword id="KW-1185">Reference proteome</keyword>
<keyword id="KW-0946">Virion</keyword>
<reference key="1">
    <citation type="journal article" date="1991" name="J. Biol. Chem.">
        <title>Identification, sequence, and expression of the gene encoding a Mr 35,000 subunit of the vaccinia virus DNA-dependent RNA polymerase.</title>
        <authorList>
            <person name="Amegadzie B.Y."/>
            <person name="Ahn B.-Y."/>
            <person name="Moss B."/>
        </authorList>
    </citation>
    <scope>NUCLEOTIDE SEQUENCE [GENOMIC DNA]</scope>
</reference>
<reference key="2">
    <citation type="submission" date="2003-02" db="EMBL/GenBank/DDBJ databases">
        <title>Sequencing of the coding region of Vaccinia-WR to an average 9-fold redundancy and an error rate of 0.16/10kb.</title>
        <authorList>
            <person name="Esposito J.J."/>
            <person name="Frace A.M."/>
            <person name="Sammons S.A."/>
            <person name="Olsen-Rasmussen M."/>
            <person name="Osborne J."/>
            <person name="Wohlhueter R."/>
        </authorList>
    </citation>
    <scope>NUCLEOTIDE SEQUENCE [LARGE SCALE GENOMIC DNA]</scope>
</reference>
<reference key="3">
    <citation type="journal article" date="2007" name="J. Virol.">
        <title>Vaccinia virus 4c (A26L) protein on intracellular mature virus binds to the extracellular cellular matrix laminin.</title>
        <authorList>
            <person name="Chiu W.L."/>
            <person name="Lin C.L."/>
            <person name="Yang M.H."/>
            <person name="Tzou D.L."/>
            <person name="Chang W."/>
        </authorList>
    </citation>
    <scope>INTERACTION WITH HOST LAMININ</scope>
</reference>
<reference key="4">
    <citation type="journal article" date="2008" name="J. Virol.">
        <title>Vaccinia virus A26 and A27 proteins form a stable complex tethered to mature virions by association with the A17 transmembrane protein.</title>
        <authorList>
            <person name="Howard A.R."/>
            <person name="Senkevich T.G."/>
            <person name="Moss B."/>
        </authorList>
    </citation>
    <scope>INTERACTION WITH OPG154</scope>
</reference>
<reference key="5">
    <citation type="journal article" date="2009" name="J. Virol.">
        <title>Disulfide bond formation at the C termini of vaccinia virus A26 and A27 proteins does not require viral redox enzymes and suppresses glycosaminoglycan-mediated cell fusion.</title>
        <authorList>
            <person name="Ching Y.C."/>
            <person name="Chung C.S."/>
            <person name="Huang C.Y."/>
            <person name="Hsia Y."/>
            <person name="Tang Y.L."/>
            <person name="Chang W."/>
        </authorList>
    </citation>
    <scope>SUBCELLULAR LOCATION</scope>
    <scope>INTERACTION WITH OPG154</scope>
    <scope>MUTAGENESIS OF CYS-441 AND CYS-442</scope>
</reference>
<reference key="6">
    <citation type="journal article" date="2010" name="J. Virol.">
        <title>Congregation of orthopoxvirus virions in cytoplasmic A-type inclusions is mediated by interactions of a bridging protein (A26p) with a matrix protein (ATIp) and a virion membrane-associated protein (A27p).</title>
        <authorList>
            <person name="Howard A.R."/>
            <person name="Weisberg A.S."/>
            <person name="Moss B."/>
        </authorList>
    </citation>
    <scope>INTERACTION WITH PROTEIN OPG152</scope>
</reference>
<reference key="7">
    <citation type="journal article" date="2010" name="J. Virol.">
        <title>Vaccinia virus A25 and A26 proteins are fusion suppressors for mature virions and determine strain-specific virus entry pathways into HeLa, CHO-K1, and L cells.</title>
        <authorList>
            <person name="Chang S.J."/>
            <person name="Chang Y.X."/>
            <person name="Izmailyan R."/>
            <person name="Tang Y.L."/>
            <person name="Chang W."/>
        </authorList>
    </citation>
    <scope>FUNCTION</scope>
</reference>
<reference key="8">
    <citation type="journal article" date="2012" name="J. Virol.">
        <title>Vaccinia mature virus fusion regulator A26 protein binds to A16 and G9 proteins of the viral entry fusion complex and dissociates from mature virions at low pH.</title>
        <authorList>
            <person name="Chang S.J."/>
            <person name="Shih A.C."/>
            <person name="Tang Y.L."/>
            <person name="Chang W."/>
        </authorList>
    </citation>
    <scope>FUNCTION</scope>
    <scope>INTERACTION WITH OPG143 AND OPG094</scope>
</reference>
<reference key="9">
    <citation type="journal article" date="2019" name="PLoS Pathog.">
        <title>Vaccinia viral A26 protein is a fusion suppressor of mature virus and triggers membrane fusion through conformational change at low pH.</title>
        <authorList>
            <person name="Chang H.W."/>
            <person name="Yang C.H."/>
            <person name="Luo Y.C."/>
            <person name="Su B.G."/>
            <person name="Cheng H.Y."/>
            <person name="Tung S.Y."/>
            <person name="Carillo K.J.D."/>
            <person name="Liao Y.T."/>
            <person name="Tzou D.M."/>
            <person name="Wang H.C."/>
            <person name="Chang W."/>
        </authorList>
    </citation>
    <scope>X-RAY CRYSTALLOGRAPHY (1.2 ANGSTROMS)</scope>
    <scope>FUNCTION</scope>
    <scope>MUTAGENESIS OF HIS-48 AND HIS-53</scope>
    <scope>DISULFIDE BOND</scope>
</reference>
<name>PG153_VACCW</name>
<protein>
    <recommendedName>
        <fullName>Envelop protein OPG153</fullName>
    </recommendedName>
</protein>